<protein>
    <recommendedName>
        <fullName evidence="4">Protein VERNALIZATION 3</fullName>
        <shortName evidence="4">BdVRN3</shortName>
    </recommendedName>
    <alternativeName>
        <fullName evidence="3">Protein FLOWERING LOCUS T 2</fullName>
    </alternativeName>
</protein>
<feature type="chain" id="PRO_0000458553" description="Protein VERNALIZATION 3">
    <location>
        <begin position="1"/>
        <end position="177"/>
    </location>
</feature>
<dbReference type="EMBL" id="KF572024">
    <property type="protein sequence ID" value="AHB63018.1"/>
    <property type="molecule type" value="mRNA"/>
</dbReference>
<dbReference type="EMBL" id="CM000880">
    <property type="protein sequence ID" value="KQK19531.1"/>
    <property type="molecule type" value="Genomic_DNA"/>
</dbReference>
<dbReference type="RefSeq" id="XP_003564300.1">
    <property type="nucleotide sequence ID" value="XM_003564252.2"/>
</dbReference>
<dbReference type="SMR" id="I1H0V9"/>
<dbReference type="FunCoup" id="I1H0V9">
    <property type="interactions" value="946"/>
</dbReference>
<dbReference type="STRING" id="15368.I1H0V9"/>
<dbReference type="EnsemblPlants" id="KQK19531">
    <property type="protein sequence ID" value="KQK19531"/>
    <property type="gene ID" value="BRADI_1g48830v3"/>
</dbReference>
<dbReference type="GeneID" id="100831221"/>
<dbReference type="Gramene" id="KQK19531">
    <property type="protein sequence ID" value="KQK19531"/>
    <property type="gene ID" value="BRADI_1g48830v3"/>
</dbReference>
<dbReference type="KEGG" id="bdi:100831221"/>
<dbReference type="eggNOG" id="KOG3346">
    <property type="taxonomic scope" value="Eukaryota"/>
</dbReference>
<dbReference type="HOGENOM" id="CLU_043994_6_1_1"/>
<dbReference type="OMA" id="QEVICYE"/>
<dbReference type="OrthoDB" id="2506647at2759"/>
<dbReference type="Proteomes" id="UP000008810">
    <property type="component" value="Chromosome 1"/>
</dbReference>
<dbReference type="GO" id="GO:0010229">
    <property type="term" value="P:inflorescence development"/>
    <property type="evidence" value="ECO:0000318"/>
    <property type="project" value="GO_Central"/>
</dbReference>
<dbReference type="GO" id="GO:0010220">
    <property type="term" value="P:positive regulation of vernalization response"/>
    <property type="evidence" value="ECO:0000314"/>
    <property type="project" value="UniProtKB"/>
</dbReference>
<dbReference type="GO" id="GO:0009909">
    <property type="term" value="P:regulation of flower development"/>
    <property type="evidence" value="ECO:0000318"/>
    <property type="project" value="GO_Central"/>
</dbReference>
<dbReference type="GO" id="GO:2000028">
    <property type="term" value="P:regulation of photoperiodism, flowering"/>
    <property type="evidence" value="ECO:0000315"/>
    <property type="project" value="UniProtKB"/>
</dbReference>
<dbReference type="GO" id="GO:0048510">
    <property type="term" value="P:regulation of timing of transition from vegetative to reproductive phase"/>
    <property type="evidence" value="ECO:0000318"/>
    <property type="project" value="GO_Central"/>
</dbReference>
<dbReference type="GO" id="GO:0010228">
    <property type="term" value="P:vegetative to reproductive phase transition of meristem"/>
    <property type="evidence" value="ECO:0000318"/>
    <property type="project" value="GO_Central"/>
</dbReference>
<dbReference type="GO" id="GO:0010048">
    <property type="term" value="P:vernalization response"/>
    <property type="evidence" value="ECO:0000270"/>
    <property type="project" value="UniProtKB"/>
</dbReference>
<dbReference type="CDD" id="cd00866">
    <property type="entry name" value="PEBP_euk"/>
    <property type="match status" value="1"/>
</dbReference>
<dbReference type="FunFam" id="3.90.280.10:FF:000001">
    <property type="entry name" value="Terminal flower 1"/>
    <property type="match status" value="1"/>
</dbReference>
<dbReference type="Gene3D" id="3.90.280.10">
    <property type="entry name" value="PEBP-like"/>
    <property type="match status" value="1"/>
</dbReference>
<dbReference type="InterPro" id="IPR008914">
    <property type="entry name" value="PEBP"/>
</dbReference>
<dbReference type="InterPro" id="IPR036610">
    <property type="entry name" value="PEBP-like_sf"/>
</dbReference>
<dbReference type="InterPro" id="IPR035810">
    <property type="entry name" value="PEBP_euk"/>
</dbReference>
<dbReference type="InterPro" id="IPR001858">
    <property type="entry name" value="Phosphatidylethanolamine-bd_CS"/>
</dbReference>
<dbReference type="PANTHER" id="PTHR11362">
    <property type="entry name" value="PHOSPHATIDYLETHANOLAMINE-BINDING PROTEIN"/>
    <property type="match status" value="1"/>
</dbReference>
<dbReference type="PANTHER" id="PTHR11362:SF9">
    <property type="entry name" value="PROTEIN FLOWERING LOCUS T-RELATED"/>
    <property type="match status" value="1"/>
</dbReference>
<dbReference type="Pfam" id="PF01161">
    <property type="entry name" value="PBP"/>
    <property type="match status" value="1"/>
</dbReference>
<dbReference type="SUPFAM" id="SSF49777">
    <property type="entry name" value="PEBP-like"/>
    <property type="match status" value="1"/>
</dbReference>
<dbReference type="PROSITE" id="PS01220">
    <property type="entry name" value="PBP"/>
    <property type="match status" value="1"/>
</dbReference>
<evidence type="ECO:0000269" key="1">
    <source>
    </source>
</evidence>
<evidence type="ECO:0000269" key="2">
    <source>
    </source>
</evidence>
<evidence type="ECO:0000303" key="3">
    <source>
    </source>
</evidence>
<evidence type="ECO:0000303" key="4">
    <source>
    </source>
</evidence>
<evidence type="ECO:0000305" key="5"/>
<evidence type="ECO:0000312" key="6">
    <source>
        <dbReference type="EMBL" id="KQK19531.1"/>
    </source>
</evidence>
<accession>I1H0V9</accession>
<name>VRN3_BRADI</name>
<organism>
    <name type="scientific">Brachypodium distachyon</name>
    <name type="common">Purple false brome</name>
    <name type="synonym">Trachynia distachya</name>
    <dbReference type="NCBI Taxonomy" id="15368"/>
    <lineage>
        <taxon>Eukaryota</taxon>
        <taxon>Viridiplantae</taxon>
        <taxon>Streptophyta</taxon>
        <taxon>Embryophyta</taxon>
        <taxon>Tracheophyta</taxon>
        <taxon>Spermatophyta</taxon>
        <taxon>Magnoliopsida</taxon>
        <taxon>Liliopsida</taxon>
        <taxon>Poales</taxon>
        <taxon>Poaceae</taxon>
        <taxon>BOP clade</taxon>
        <taxon>Pooideae</taxon>
        <taxon>Stipodae</taxon>
        <taxon>Brachypodieae</taxon>
        <taxon>Brachypodium</taxon>
    </lineage>
</organism>
<sequence>MAGRDRDPLVVGRVVGDVLDPFVRTTNLRVSFGNRNVSNGCELKPSMVTHQPRVEVGGNEMRTFYTLVMVDPDAPSPSDPNLREYLHWLVTDIPGTTGASFGQEVMCYESPRPSMGIHRFVFVLFQQLGRQTVYAPGWRQNFNTRDFAELYNLGPPVAAVYFNCQREAGSGGRRMYP</sequence>
<comment type="function">
    <text evidence="1 2">Involved in the regulation of vernalization and of flowering time; this process in essential for flowering in cv. Bd29-1 but seems do not occur in cv. Bd21.</text>
</comment>
<comment type="tissue specificity">
    <text evidence="1">Expressed in leaves but not in shoot apex.</text>
</comment>
<comment type="induction">
    <text evidence="1 2">Follows a circadian rhythm expression with a maximum transient peak four hours before dawn in long-day (LD) conditions, but barely expressed in short-day (SD) conditions (PubMed:24285787). Targeted for mRNA cleavage by Pooideae-specific microRNAs miR5200a and miR5200b in leaves in short days, but not in long days (PubMed:24285787). In cv. Bd21, accumulates progressively in the shoot apical meristem (SAM) before vernalization but stable levels during vernalization (PubMed:28690631). In cv. Bd29-1 low expression before vernalization but expressed gradually during vernalization to reach a peak after 8 weeks (PubMed:28690631).</text>
</comment>
<comment type="similarity">
    <text evidence="5">Belongs to the phosphatidylethanolamine-binding protein family.</text>
</comment>
<proteinExistence type="evidence at transcript level"/>
<reference key="1">
    <citation type="journal article" date="2013" name="Plant Cell">
        <title>Regulation of FLOWERING LOCUS T by a microRNA in Brachypodium distachyon.</title>
        <authorList>
            <person name="Wu L."/>
            <person name="Liu D."/>
            <person name="Wu J."/>
            <person name="Zhang R."/>
            <person name="Qin Z."/>
            <person name="Liu D."/>
            <person name="Li A."/>
            <person name="Fu D."/>
            <person name="Zhai W."/>
            <person name="Mao L."/>
        </authorList>
    </citation>
    <scope>NUCLEOTIDE SEQUENCE [MRNA]</scope>
    <scope>FUNCTION</scope>
    <scope>TISSUE SPECIFICITY</scope>
    <scope>INDUCTION</scope>
    <source>
        <strain>cv. Bd21</strain>
    </source>
</reference>
<reference key="2">
    <citation type="journal article" date="2010" name="Nature">
        <title>Genome sequencing and analysis of the model grass Brachypodium distachyon.</title>
        <authorList>
            <consortium name="International Brachypodium Initiative"/>
        </authorList>
    </citation>
    <scope>NUCLEOTIDE SEQUENCE [LARGE SCALE GENOMIC DNA]</scope>
    <source>
        <strain>cv. Bd21</strain>
    </source>
</reference>
<reference key="3">
    <citation type="submission" date="2017-06" db="EMBL/GenBank/DDBJ databases">
        <title>WGS assembly of Brachypodium distachyon.</title>
        <authorList>
            <consortium name="The International Brachypodium Initiative"/>
            <person name="Lucas S."/>
            <person name="Harmon-Smith M."/>
            <person name="Lail K."/>
            <person name="Tice H."/>
            <person name="Grimwood J."/>
            <person name="Bruce D."/>
            <person name="Barry K."/>
            <person name="Shu S."/>
            <person name="Lindquist E."/>
            <person name="Wang M."/>
            <person name="Pitluck S."/>
            <person name="Vogel J.P."/>
            <person name="Garvin D.F."/>
            <person name="Mockler T.C."/>
            <person name="Schmutz J."/>
            <person name="Rokhsar D."/>
            <person name="Bevan M.W."/>
        </authorList>
    </citation>
    <scope>GENOME REANNOTATION</scope>
    <source>
        <strain>cv. Bd21</strain>
    </source>
</reference>
<reference key="4">
    <citation type="journal article" date="2017" name="Front. Plant Sci.">
        <title>BdVRN1 expression confers flowering competency and is negatively correlated with freezing tolerance in Brachypodium distachyon.</title>
        <authorList>
            <person name="Feng Y."/>
            <person name="Yin Y."/>
            <person name="Fei S."/>
        </authorList>
    </citation>
    <scope>FUNCTION</scope>
    <scope>INDUCTION BY VERNALIZATION</scope>
    <scope>NOMENCLATURE</scope>
    <source>
        <strain>cv. Bd21</strain>
        <strain>cv. Bd29-1</strain>
    </source>
</reference>
<keyword id="KW-1185">Reference proteome</keyword>
<gene>
    <name evidence="4" type="primary">VRN3</name>
    <name evidence="3" type="synonym">FTL2</name>
    <name evidence="6" type="ORF">BRADI_1g48830v3</name>
</gene>